<sequence length="366" mass="40985">MKFNDYVENLQNYEAGKPVELVVREYGVKEDDVIKLASNENPLGTGKKAVKAIYKMAKHANLYPDDSMFELKGALADKYGVSEKNVIIGAGSDQIIEFLIHAKCNENNGILTAGTTFSMYGIYAKHAKAKHFSTASKFHDLKEIKELYESHKDEISVIFLCVPNNPLGECLDAKDVIKFIKSIDDDTLVVIDAAYNEFASFKDKHKHIEPAEIVKLKNAIYLGTFSKVYGLGGLRVGYGVADEKIISALYKLRPPFNVANLSLAAAVAALQDKKFIEKTIKNNFKEMKKYEKFANATGIKFIKSYTNFITFILDESKKSSEISQKLLEKGLIVRDLKGYGLNAIRITVGLPKQNKRIFDELRKLLG</sequence>
<evidence type="ECO:0000255" key="1">
    <source>
        <dbReference type="HAMAP-Rule" id="MF_01023"/>
    </source>
</evidence>
<protein>
    <recommendedName>
        <fullName evidence="1">Histidinol-phosphate aminotransferase</fullName>
        <ecNumber evidence="1">2.6.1.9</ecNumber>
    </recommendedName>
    <alternativeName>
        <fullName evidence="1">Imidazole acetol-phosphate transaminase</fullName>
    </alternativeName>
</protein>
<keyword id="KW-0028">Amino-acid biosynthesis</keyword>
<keyword id="KW-0032">Aminotransferase</keyword>
<keyword id="KW-0368">Histidine biosynthesis</keyword>
<keyword id="KW-0663">Pyridoxal phosphate</keyword>
<keyword id="KW-1185">Reference proteome</keyword>
<keyword id="KW-0808">Transferase</keyword>
<comment type="catalytic activity">
    <reaction evidence="1">
        <text>L-histidinol phosphate + 2-oxoglutarate = 3-(imidazol-4-yl)-2-oxopropyl phosphate + L-glutamate</text>
        <dbReference type="Rhea" id="RHEA:23744"/>
        <dbReference type="ChEBI" id="CHEBI:16810"/>
        <dbReference type="ChEBI" id="CHEBI:29985"/>
        <dbReference type="ChEBI" id="CHEBI:57766"/>
        <dbReference type="ChEBI" id="CHEBI:57980"/>
        <dbReference type="EC" id="2.6.1.9"/>
    </reaction>
</comment>
<comment type="cofactor">
    <cofactor evidence="1">
        <name>pyridoxal 5'-phosphate</name>
        <dbReference type="ChEBI" id="CHEBI:597326"/>
    </cofactor>
</comment>
<comment type="pathway">
    <text evidence="1">Amino-acid biosynthesis; L-histidine biosynthesis; L-histidine from 5-phospho-alpha-D-ribose 1-diphosphate: step 7/9.</text>
</comment>
<comment type="subunit">
    <text evidence="1">Homodimer.</text>
</comment>
<comment type="similarity">
    <text evidence="1">Belongs to the class-II pyridoxal-phosphate-dependent aminotransferase family. Histidinol-phosphate aminotransferase subfamily.</text>
</comment>
<gene>
    <name evidence="1" type="primary">hisC</name>
    <name type="ordered locus">CHAB381_1298</name>
</gene>
<reference key="1">
    <citation type="submission" date="2007-07" db="EMBL/GenBank/DDBJ databases">
        <title>Complete genome sequence of Campylobacter hominis ATCC BAA-381, a commensal isolated from the human gastrointestinal tract.</title>
        <authorList>
            <person name="Fouts D.E."/>
            <person name="Mongodin E.F."/>
            <person name="Puiu D."/>
            <person name="Sebastian Y."/>
            <person name="Miller W.G."/>
            <person name="Mandrell R.E."/>
            <person name="Nelson K.E."/>
        </authorList>
    </citation>
    <scope>NUCLEOTIDE SEQUENCE [LARGE SCALE GENOMIC DNA]</scope>
    <source>
        <strain>ATCC BAA-381 / DSM 21671 / CCUG 45161 / LMG 19568 / NCTC 13146 / CH001A</strain>
    </source>
</reference>
<dbReference type="EC" id="2.6.1.9" evidence="1"/>
<dbReference type="EMBL" id="CP000776">
    <property type="protein sequence ID" value="ABS52297.1"/>
    <property type="molecule type" value="Genomic_DNA"/>
</dbReference>
<dbReference type="RefSeq" id="WP_012109150.1">
    <property type="nucleotide sequence ID" value="NC_009714.1"/>
</dbReference>
<dbReference type="SMR" id="A7I2V8"/>
<dbReference type="STRING" id="360107.CHAB381_1298"/>
<dbReference type="KEGG" id="cha:CHAB381_1298"/>
<dbReference type="eggNOG" id="COG0079">
    <property type="taxonomic scope" value="Bacteria"/>
</dbReference>
<dbReference type="HOGENOM" id="CLU_017584_3_3_7"/>
<dbReference type="OrthoDB" id="9813612at2"/>
<dbReference type="UniPathway" id="UPA00031">
    <property type="reaction ID" value="UER00012"/>
</dbReference>
<dbReference type="Proteomes" id="UP000002407">
    <property type="component" value="Chromosome"/>
</dbReference>
<dbReference type="GO" id="GO:0004400">
    <property type="term" value="F:histidinol-phosphate transaminase activity"/>
    <property type="evidence" value="ECO:0007669"/>
    <property type="project" value="UniProtKB-UniRule"/>
</dbReference>
<dbReference type="GO" id="GO:0030170">
    <property type="term" value="F:pyridoxal phosphate binding"/>
    <property type="evidence" value="ECO:0007669"/>
    <property type="project" value="InterPro"/>
</dbReference>
<dbReference type="GO" id="GO:0000105">
    <property type="term" value="P:L-histidine biosynthetic process"/>
    <property type="evidence" value="ECO:0007669"/>
    <property type="project" value="UniProtKB-UniRule"/>
</dbReference>
<dbReference type="CDD" id="cd00609">
    <property type="entry name" value="AAT_like"/>
    <property type="match status" value="1"/>
</dbReference>
<dbReference type="Gene3D" id="3.90.1150.10">
    <property type="entry name" value="Aspartate Aminotransferase, domain 1"/>
    <property type="match status" value="1"/>
</dbReference>
<dbReference type="Gene3D" id="3.40.640.10">
    <property type="entry name" value="Type I PLP-dependent aspartate aminotransferase-like (Major domain)"/>
    <property type="match status" value="1"/>
</dbReference>
<dbReference type="HAMAP" id="MF_01023">
    <property type="entry name" value="HisC_aminotrans_2"/>
    <property type="match status" value="1"/>
</dbReference>
<dbReference type="InterPro" id="IPR004839">
    <property type="entry name" value="Aminotransferase_I/II_large"/>
</dbReference>
<dbReference type="InterPro" id="IPR005861">
    <property type="entry name" value="HisP_aminotrans"/>
</dbReference>
<dbReference type="InterPro" id="IPR050106">
    <property type="entry name" value="HistidinolP_aminotransfase"/>
</dbReference>
<dbReference type="InterPro" id="IPR015424">
    <property type="entry name" value="PyrdxlP-dep_Trfase"/>
</dbReference>
<dbReference type="InterPro" id="IPR015421">
    <property type="entry name" value="PyrdxlP-dep_Trfase_major"/>
</dbReference>
<dbReference type="InterPro" id="IPR015422">
    <property type="entry name" value="PyrdxlP-dep_Trfase_small"/>
</dbReference>
<dbReference type="NCBIfam" id="TIGR01141">
    <property type="entry name" value="hisC"/>
    <property type="match status" value="1"/>
</dbReference>
<dbReference type="PANTHER" id="PTHR43643:SF3">
    <property type="entry name" value="HISTIDINOL-PHOSPHATE AMINOTRANSFERASE"/>
    <property type="match status" value="1"/>
</dbReference>
<dbReference type="PANTHER" id="PTHR43643">
    <property type="entry name" value="HISTIDINOL-PHOSPHATE AMINOTRANSFERASE 2"/>
    <property type="match status" value="1"/>
</dbReference>
<dbReference type="Pfam" id="PF00155">
    <property type="entry name" value="Aminotran_1_2"/>
    <property type="match status" value="1"/>
</dbReference>
<dbReference type="SUPFAM" id="SSF53383">
    <property type="entry name" value="PLP-dependent transferases"/>
    <property type="match status" value="1"/>
</dbReference>
<name>HIS8_CAMHC</name>
<organism>
    <name type="scientific">Campylobacter hominis (strain ATCC BAA-381 / DSM 21671 / CCUG 45161 / LMG 19568 / NCTC 13146 / CH001A)</name>
    <dbReference type="NCBI Taxonomy" id="360107"/>
    <lineage>
        <taxon>Bacteria</taxon>
        <taxon>Pseudomonadati</taxon>
        <taxon>Campylobacterota</taxon>
        <taxon>Epsilonproteobacteria</taxon>
        <taxon>Campylobacterales</taxon>
        <taxon>Campylobacteraceae</taxon>
        <taxon>Campylobacter</taxon>
    </lineage>
</organism>
<feature type="chain" id="PRO_1000063466" description="Histidinol-phosphate aminotransferase">
    <location>
        <begin position="1"/>
        <end position="366"/>
    </location>
</feature>
<feature type="modified residue" description="N6-(pyridoxal phosphate)lysine" evidence="1">
    <location>
        <position position="227"/>
    </location>
</feature>
<accession>A7I2V8</accession>
<proteinExistence type="inferred from homology"/>